<evidence type="ECO:0000255" key="1">
    <source>
        <dbReference type="HAMAP-Rule" id="MF_01584"/>
    </source>
</evidence>
<gene>
    <name evidence="1" type="primary">yceH</name>
    <name type="ordered locus">SBO_1997</name>
</gene>
<accession>Q31ZC2</accession>
<organism>
    <name type="scientific">Shigella boydii serotype 4 (strain Sb227)</name>
    <dbReference type="NCBI Taxonomy" id="300268"/>
    <lineage>
        <taxon>Bacteria</taxon>
        <taxon>Pseudomonadati</taxon>
        <taxon>Pseudomonadota</taxon>
        <taxon>Gammaproteobacteria</taxon>
        <taxon>Enterobacterales</taxon>
        <taxon>Enterobacteriaceae</taxon>
        <taxon>Shigella</taxon>
    </lineage>
</organism>
<feature type="chain" id="PRO_0000309432" description="UPF0502 protein YceH">
    <location>
        <begin position="1"/>
        <end position="215"/>
    </location>
</feature>
<feature type="modified residue" description="N6-acetyllysine" evidence="1">
    <location>
        <position position="80"/>
    </location>
</feature>
<proteinExistence type="inferred from homology"/>
<name>YCEH_SHIBS</name>
<dbReference type="EMBL" id="CP000036">
    <property type="protein sequence ID" value="ABB66586.1"/>
    <property type="molecule type" value="Genomic_DNA"/>
</dbReference>
<dbReference type="RefSeq" id="WP_000877097.1">
    <property type="nucleotide sequence ID" value="NC_007613.1"/>
</dbReference>
<dbReference type="SMR" id="Q31ZC2"/>
<dbReference type="KEGG" id="sbo:SBO_1997"/>
<dbReference type="HOGENOM" id="CLU_057831_2_0_6"/>
<dbReference type="Proteomes" id="UP000007067">
    <property type="component" value="Chromosome"/>
</dbReference>
<dbReference type="FunFam" id="1.10.10.10:FF:000196">
    <property type="entry name" value="UPF0502 protein YceH"/>
    <property type="match status" value="1"/>
</dbReference>
<dbReference type="FunFam" id="1.10.10.10:FF:000241">
    <property type="entry name" value="UPF0502 protein YceH"/>
    <property type="match status" value="1"/>
</dbReference>
<dbReference type="Gene3D" id="1.10.10.10">
    <property type="entry name" value="Winged helix-like DNA-binding domain superfamily/Winged helix DNA-binding domain"/>
    <property type="match status" value="2"/>
</dbReference>
<dbReference type="HAMAP" id="MF_01584">
    <property type="entry name" value="UPF0502"/>
    <property type="match status" value="1"/>
</dbReference>
<dbReference type="InterPro" id="IPR007432">
    <property type="entry name" value="DUF480"/>
</dbReference>
<dbReference type="InterPro" id="IPR036388">
    <property type="entry name" value="WH-like_DNA-bd_sf"/>
</dbReference>
<dbReference type="InterPro" id="IPR036390">
    <property type="entry name" value="WH_DNA-bd_sf"/>
</dbReference>
<dbReference type="NCBIfam" id="NF008413">
    <property type="entry name" value="PRK11239.1"/>
    <property type="match status" value="1"/>
</dbReference>
<dbReference type="PANTHER" id="PTHR38768">
    <property type="entry name" value="UPF0502 PROTEIN YCEH"/>
    <property type="match status" value="1"/>
</dbReference>
<dbReference type="PANTHER" id="PTHR38768:SF1">
    <property type="entry name" value="UPF0502 PROTEIN YCEH"/>
    <property type="match status" value="1"/>
</dbReference>
<dbReference type="Pfam" id="PF04337">
    <property type="entry name" value="DUF480"/>
    <property type="match status" value="1"/>
</dbReference>
<dbReference type="SUPFAM" id="SSF46785">
    <property type="entry name" value="Winged helix' DNA-binding domain"/>
    <property type="match status" value="2"/>
</dbReference>
<reference key="1">
    <citation type="journal article" date="2005" name="Nucleic Acids Res.">
        <title>Genome dynamics and diversity of Shigella species, the etiologic agents of bacillary dysentery.</title>
        <authorList>
            <person name="Yang F."/>
            <person name="Yang J."/>
            <person name="Zhang X."/>
            <person name="Chen L."/>
            <person name="Jiang Y."/>
            <person name="Yan Y."/>
            <person name="Tang X."/>
            <person name="Wang J."/>
            <person name="Xiong Z."/>
            <person name="Dong J."/>
            <person name="Xue Y."/>
            <person name="Zhu Y."/>
            <person name="Xu X."/>
            <person name="Sun L."/>
            <person name="Chen S."/>
            <person name="Nie H."/>
            <person name="Peng J."/>
            <person name="Xu J."/>
            <person name="Wang Y."/>
            <person name="Yuan Z."/>
            <person name="Wen Y."/>
            <person name="Yao Z."/>
            <person name="Shen Y."/>
            <person name="Qiang B."/>
            <person name="Hou Y."/>
            <person name="Yu J."/>
            <person name="Jin Q."/>
        </authorList>
    </citation>
    <scope>NUCLEOTIDE SEQUENCE [LARGE SCALE GENOMIC DNA]</scope>
    <source>
        <strain>Sb227</strain>
    </source>
</reference>
<sequence>MKYQLTALEARVIGCLLEKQVTTPEQYPLSVNGVVTACNQKTNREPVMNLSESEVQEQLDNLVKRHYLRTVSGFGNRVTKYEQRFCNSEFGDLKLSAAEVALITTLLLRGAQTPGELRSRAARMYEFSDMAELESTLEQLANREDGPFVVRLAREPGKRESRYMHLFSGEVEDQPAVTDMSNAVDGDLQARVEALEIEVAELKQRLDSLLAHLGD</sequence>
<protein>
    <recommendedName>
        <fullName evidence="1">UPF0502 protein YceH</fullName>
    </recommendedName>
</protein>
<comment type="similarity">
    <text evidence="1">Belongs to the UPF0502 family.</text>
</comment>
<keyword id="KW-0007">Acetylation</keyword>